<comment type="function">
    <text evidence="1">Cleaves the N-terminal amino acid of tripeptides.</text>
</comment>
<comment type="catalytic activity">
    <reaction evidence="1">
        <text>Release of the N-terminal residue from a tripeptide.</text>
        <dbReference type="EC" id="3.4.11.4"/>
    </reaction>
</comment>
<comment type="cofactor">
    <cofactor evidence="1">
        <name>Zn(2+)</name>
        <dbReference type="ChEBI" id="CHEBI:29105"/>
    </cofactor>
    <text evidence="1">Binds 2 Zn(2+) ions per subunit.</text>
</comment>
<comment type="subcellular location">
    <subcellularLocation>
        <location evidence="1">Cytoplasm</location>
    </subcellularLocation>
</comment>
<comment type="similarity">
    <text evidence="1">Belongs to the peptidase M20B family.</text>
</comment>
<feature type="chain" id="PRO_0000274021" description="Peptidase T">
    <location>
        <begin position="1"/>
        <end position="408"/>
    </location>
</feature>
<feature type="active site" evidence="1">
    <location>
        <position position="80"/>
    </location>
</feature>
<feature type="active site" description="Proton acceptor" evidence="1">
    <location>
        <position position="174"/>
    </location>
</feature>
<feature type="binding site" evidence="1">
    <location>
        <position position="78"/>
    </location>
    <ligand>
        <name>Zn(2+)</name>
        <dbReference type="ChEBI" id="CHEBI:29105"/>
        <label>1</label>
    </ligand>
</feature>
<feature type="binding site" evidence="1">
    <location>
        <position position="140"/>
    </location>
    <ligand>
        <name>Zn(2+)</name>
        <dbReference type="ChEBI" id="CHEBI:29105"/>
        <label>1</label>
    </ligand>
</feature>
<feature type="binding site" evidence="1">
    <location>
        <position position="140"/>
    </location>
    <ligand>
        <name>Zn(2+)</name>
        <dbReference type="ChEBI" id="CHEBI:29105"/>
        <label>2</label>
    </ligand>
</feature>
<feature type="binding site" evidence="1">
    <location>
        <position position="175"/>
    </location>
    <ligand>
        <name>Zn(2+)</name>
        <dbReference type="ChEBI" id="CHEBI:29105"/>
        <label>2</label>
    </ligand>
</feature>
<feature type="binding site" evidence="1">
    <location>
        <position position="197"/>
    </location>
    <ligand>
        <name>Zn(2+)</name>
        <dbReference type="ChEBI" id="CHEBI:29105"/>
        <label>1</label>
    </ligand>
</feature>
<feature type="binding site" evidence="1">
    <location>
        <position position="379"/>
    </location>
    <ligand>
        <name>Zn(2+)</name>
        <dbReference type="ChEBI" id="CHEBI:29105"/>
        <label>2</label>
    </ligand>
</feature>
<evidence type="ECO:0000255" key="1">
    <source>
        <dbReference type="HAMAP-Rule" id="MF_00550"/>
    </source>
</evidence>
<accession>Q2YSI6</accession>
<name>PEPT_STAAB</name>
<keyword id="KW-0031">Aminopeptidase</keyword>
<keyword id="KW-0963">Cytoplasm</keyword>
<keyword id="KW-0378">Hydrolase</keyword>
<keyword id="KW-0479">Metal-binding</keyword>
<keyword id="KW-0482">Metalloprotease</keyword>
<keyword id="KW-0645">Protease</keyword>
<keyword id="KW-0862">Zinc</keyword>
<proteinExistence type="inferred from homology"/>
<sequence>MKNQLIDRLTRYTTIDTQSDPKSTTTPSTEKQWDLLHLLERELQQLGLPTDLDENGYLFATLESNIDADVPTVGFLAHVDTSPDFNASNVKPQIIENYDSKPYKLGNTKRVLDPKVFPELNSLVGHTLMVTDGTSLLGADDKAGIVEIMEAICYLQEHPEIKHGTIRIGFTPDEEIGRGPHKFDVDRFNADFAYTMDGSQYGELQYESFNAAEAVITCHGVNVHPGSAKNAMVNAIRLGEQFDSLLPDSEVPERTEGYEGFYHLMNFEGTVEKATLQYIIRDHDKKQFELRKKRILEIRDDINAHFENYPVKVDISDQYFNMAEKILPLPHIIDIPKRVFAKLDIPANTEPIRGGTDGSQLSFMGLPTPNIFTGCGNFHGPYEYASIDVMEKAVQVIIGIVEDIAENN</sequence>
<organism>
    <name type="scientific">Staphylococcus aureus (strain bovine RF122 / ET3-1)</name>
    <dbReference type="NCBI Taxonomy" id="273036"/>
    <lineage>
        <taxon>Bacteria</taxon>
        <taxon>Bacillati</taxon>
        <taxon>Bacillota</taxon>
        <taxon>Bacilli</taxon>
        <taxon>Bacillales</taxon>
        <taxon>Staphylococcaceae</taxon>
        <taxon>Staphylococcus</taxon>
    </lineage>
</organism>
<dbReference type="EC" id="3.4.11.4" evidence="1"/>
<dbReference type="EMBL" id="AJ938182">
    <property type="protein sequence ID" value="CAI80383.1"/>
    <property type="molecule type" value="Genomic_DNA"/>
</dbReference>
<dbReference type="RefSeq" id="WP_000795830.1">
    <property type="nucleotide sequence ID" value="NC_007622.1"/>
</dbReference>
<dbReference type="SMR" id="Q2YSI6"/>
<dbReference type="MEROPS" id="M20.003"/>
<dbReference type="KEGG" id="sab:SAB0695c"/>
<dbReference type="HOGENOM" id="CLU_053676_0_0_9"/>
<dbReference type="GO" id="GO:0005829">
    <property type="term" value="C:cytosol"/>
    <property type="evidence" value="ECO:0007669"/>
    <property type="project" value="TreeGrafter"/>
</dbReference>
<dbReference type="GO" id="GO:0008237">
    <property type="term" value="F:metallopeptidase activity"/>
    <property type="evidence" value="ECO:0007669"/>
    <property type="project" value="UniProtKB-KW"/>
</dbReference>
<dbReference type="GO" id="GO:0045148">
    <property type="term" value="F:tripeptide aminopeptidase activity"/>
    <property type="evidence" value="ECO:0007669"/>
    <property type="project" value="UniProtKB-UniRule"/>
</dbReference>
<dbReference type="GO" id="GO:0008270">
    <property type="term" value="F:zinc ion binding"/>
    <property type="evidence" value="ECO:0007669"/>
    <property type="project" value="UniProtKB-UniRule"/>
</dbReference>
<dbReference type="GO" id="GO:0043171">
    <property type="term" value="P:peptide catabolic process"/>
    <property type="evidence" value="ECO:0007669"/>
    <property type="project" value="UniProtKB-UniRule"/>
</dbReference>
<dbReference type="GO" id="GO:0006508">
    <property type="term" value="P:proteolysis"/>
    <property type="evidence" value="ECO:0007669"/>
    <property type="project" value="UniProtKB-UniRule"/>
</dbReference>
<dbReference type="CDD" id="cd03892">
    <property type="entry name" value="M20_peptT"/>
    <property type="match status" value="1"/>
</dbReference>
<dbReference type="FunFam" id="3.30.70.360:FF:000002">
    <property type="entry name" value="Peptidase T"/>
    <property type="match status" value="1"/>
</dbReference>
<dbReference type="Gene3D" id="3.30.70.360">
    <property type="match status" value="1"/>
</dbReference>
<dbReference type="Gene3D" id="3.40.630.10">
    <property type="entry name" value="Zn peptidases"/>
    <property type="match status" value="1"/>
</dbReference>
<dbReference type="HAMAP" id="MF_00550">
    <property type="entry name" value="Aminopeptidase_M20"/>
    <property type="match status" value="1"/>
</dbReference>
<dbReference type="InterPro" id="IPR001261">
    <property type="entry name" value="ArgE/DapE_CS"/>
</dbReference>
<dbReference type="InterPro" id="IPR036264">
    <property type="entry name" value="Bact_exopeptidase_dim_dom"/>
</dbReference>
<dbReference type="InterPro" id="IPR002933">
    <property type="entry name" value="Peptidase_M20"/>
</dbReference>
<dbReference type="InterPro" id="IPR011650">
    <property type="entry name" value="Peptidase_M20_dimer"/>
</dbReference>
<dbReference type="InterPro" id="IPR010161">
    <property type="entry name" value="Peptidase_M20B"/>
</dbReference>
<dbReference type="NCBIfam" id="TIGR01882">
    <property type="entry name" value="peptidase-T"/>
    <property type="match status" value="1"/>
</dbReference>
<dbReference type="NCBIfam" id="NF003976">
    <property type="entry name" value="PRK05469.1"/>
    <property type="match status" value="1"/>
</dbReference>
<dbReference type="NCBIfam" id="NF009920">
    <property type="entry name" value="PRK13381.1"/>
    <property type="match status" value="1"/>
</dbReference>
<dbReference type="PANTHER" id="PTHR42994">
    <property type="entry name" value="PEPTIDASE T"/>
    <property type="match status" value="1"/>
</dbReference>
<dbReference type="PANTHER" id="PTHR42994:SF1">
    <property type="entry name" value="PEPTIDASE T"/>
    <property type="match status" value="1"/>
</dbReference>
<dbReference type="Pfam" id="PF07687">
    <property type="entry name" value="M20_dimer"/>
    <property type="match status" value="1"/>
</dbReference>
<dbReference type="Pfam" id="PF01546">
    <property type="entry name" value="Peptidase_M20"/>
    <property type="match status" value="1"/>
</dbReference>
<dbReference type="PIRSF" id="PIRSF037215">
    <property type="entry name" value="Peptidase_M20B"/>
    <property type="match status" value="1"/>
</dbReference>
<dbReference type="SUPFAM" id="SSF55031">
    <property type="entry name" value="Bacterial exopeptidase dimerisation domain"/>
    <property type="match status" value="1"/>
</dbReference>
<dbReference type="SUPFAM" id="SSF53187">
    <property type="entry name" value="Zn-dependent exopeptidases"/>
    <property type="match status" value="1"/>
</dbReference>
<dbReference type="PROSITE" id="PS00758">
    <property type="entry name" value="ARGE_DAPE_CPG2_1"/>
    <property type="match status" value="1"/>
</dbReference>
<dbReference type="PROSITE" id="PS00759">
    <property type="entry name" value="ARGE_DAPE_CPG2_2"/>
    <property type="match status" value="1"/>
</dbReference>
<gene>
    <name evidence="1" type="primary">pepT</name>
    <name type="ordered locus">SAB0695c</name>
</gene>
<protein>
    <recommendedName>
        <fullName evidence="1">Peptidase T</fullName>
        <ecNumber evidence="1">3.4.11.4</ecNumber>
    </recommendedName>
    <alternativeName>
        <fullName evidence="1">Aminotripeptidase</fullName>
        <shortName evidence="1">Tripeptidase</shortName>
    </alternativeName>
    <alternativeName>
        <fullName evidence="1">Tripeptide aminopeptidase</fullName>
    </alternativeName>
</protein>
<reference key="1">
    <citation type="journal article" date="2007" name="PLoS ONE">
        <title>Molecular correlates of host specialization in Staphylococcus aureus.</title>
        <authorList>
            <person name="Herron-Olson L."/>
            <person name="Fitzgerald J.R."/>
            <person name="Musser J.M."/>
            <person name="Kapur V."/>
        </authorList>
    </citation>
    <scope>NUCLEOTIDE SEQUENCE [LARGE SCALE GENOMIC DNA]</scope>
    <source>
        <strain>bovine RF122 / ET3-1</strain>
    </source>
</reference>